<dbReference type="EMBL" id="CU329672">
    <property type="protein sequence ID" value="CAO77699.1"/>
    <property type="molecule type" value="Genomic_DNA"/>
</dbReference>
<dbReference type="RefSeq" id="XP_004001756.1">
    <property type="nucleotide sequence ID" value="XM_004001707.1"/>
</dbReference>
<dbReference type="BioGRID" id="280225">
    <property type="interactions" value="3"/>
</dbReference>
<dbReference type="STRING" id="284812.U3H0P2"/>
<dbReference type="iPTMnet" id="U3H0P2"/>
<dbReference type="PaxDb" id="4896-SPCC1919.06c.1"/>
<dbReference type="EnsemblFungi" id="SPCC1919.06c.1">
    <property type="protein sequence ID" value="SPCC1919.06c.1:pep"/>
    <property type="gene ID" value="SPCC1919.06c"/>
</dbReference>
<dbReference type="PomBase" id="SPCC1919.06c">
    <property type="gene designation" value="wtf25"/>
</dbReference>
<dbReference type="VEuPathDB" id="FungiDB:SPCC1919.06c"/>
<dbReference type="HOGENOM" id="CLU_092895_0_0_1"/>
<dbReference type="InParanoid" id="U3H0P2"/>
<dbReference type="PRO" id="PR:U3H0P2"/>
<dbReference type="Proteomes" id="UP000002485">
    <property type="component" value="Chromosome III"/>
</dbReference>
<dbReference type="GO" id="GO:0005737">
    <property type="term" value="C:cytoplasm"/>
    <property type="evidence" value="ECO:0000250"/>
    <property type="project" value="PomBase"/>
</dbReference>
<dbReference type="GO" id="GO:0005635">
    <property type="term" value="C:nuclear envelope"/>
    <property type="evidence" value="ECO:0007005"/>
    <property type="project" value="PomBase"/>
</dbReference>
<dbReference type="GO" id="GO:0005774">
    <property type="term" value="C:vacuolar membrane"/>
    <property type="evidence" value="ECO:0007669"/>
    <property type="project" value="UniProtKB-SubCell"/>
</dbReference>
<dbReference type="GO" id="GO:0110134">
    <property type="term" value="P:meiotic drive"/>
    <property type="evidence" value="ECO:0000255"/>
    <property type="project" value="PomBase"/>
</dbReference>
<dbReference type="InterPro" id="IPR004982">
    <property type="entry name" value="WTF"/>
</dbReference>
<dbReference type="Pfam" id="PF03303">
    <property type="entry name" value="WTF"/>
    <property type="match status" value="1"/>
</dbReference>
<accession>U3H0P2</accession>
<comment type="function">
    <text evidence="1 2">Acts as a suppressor component of the dual wtf meiotic drive system, and can suppress but not confer meiotic drive by compatible poisons (By similarity). Wtf meiotic drive systems promote unequal transmission of alleles from the parental zygote to progeny spores by encoding a poison and an antidote from the same locus; the poison is trans-acting and forms toxic aggregates in all spores within an ascus, wherease the antidote is spore-specific and targets aggregates for degradation by the vacuole (By similarity). Meiotic drive by wtf systems therefore lead to poisoning of all progeny that do not inherit the dual poison/antidote allele, or express a compatible antidote (By similarity).</text>
</comment>
<comment type="subunit">
    <text evidence="1 3">Homomer (By similarity). Interacts with other proteins that exhibit high sequence similarity (By similarity).</text>
</comment>
<comment type="subcellular location">
    <subcellularLocation>
        <location evidence="1 4">Spore membrane</location>
        <topology evidence="4">Multi-pass membrane protein</topology>
    </subcellularLocation>
    <subcellularLocation>
        <location evidence="1 4">Vacuole membrane</location>
        <topology evidence="4">Multi-pass membrane protein</topology>
    </subcellularLocation>
</comment>
<comment type="similarity">
    <text evidence="6">Belongs to the WTF family.</text>
</comment>
<evidence type="ECO:0000250" key="1">
    <source>
        <dbReference type="UniProtKB" id="A0A218N034"/>
    </source>
</evidence>
<evidence type="ECO:0000250" key="2">
    <source>
        <dbReference type="UniProtKB" id="A0A482ATU4"/>
    </source>
</evidence>
<evidence type="ECO:0000250" key="3">
    <source>
        <dbReference type="UniProtKB" id="O74420"/>
    </source>
</evidence>
<evidence type="ECO:0000255" key="4"/>
<evidence type="ECO:0000256" key="5">
    <source>
        <dbReference type="SAM" id="MobiDB-lite"/>
    </source>
</evidence>
<evidence type="ECO:0000305" key="6"/>
<evidence type="ECO:0000312" key="7">
    <source>
        <dbReference type="PomBase" id="SPCC1919.06c"/>
    </source>
</evidence>
<keyword id="KW-0472">Membrane</keyword>
<keyword id="KW-1185">Reference proteome</keyword>
<keyword id="KW-0812">Transmembrane</keyword>
<keyword id="KW-1133">Transmembrane helix</keyword>
<keyword id="KW-0926">Vacuole</keyword>
<proteinExistence type="inferred from homology"/>
<gene>
    <name evidence="7" type="primary">wtf25</name>
    <name evidence="7" type="ORF">SPCC1919.06c</name>
</gene>
<organism>
    <name type="scientific">Schizosaccharomyces pombe (strain 972 / ATCC 24843)</name>
    <name type="common">Fission yeast</name>
    <dbReference type="NCBI Taxonomy" id="284812"/>
    <lineage>
        <taxon>Eukaryota</taxon>
        <taxon>Fungi</taxon>
        <taxon>Dikarya</taxon>
        <taxon>Ascomycota</taxon>
        <taxon>Taphrinomycotina</taxon>
        <taxon>Schizosaccharomycetes</taxon>
        <taxon>Schizosaccharomycetales</taxon>
        <taxon>Schizosaccharomycetaceae</taxon>
        <taxon>Schizosaccharomyces</taxon>
    </lineage>
</organism>
<protein>
    <recommendedName>
        <fullName evidence="7">Meiotic drive suppressor wtf25</fullName>
    </recommendedName>
</protein>
<name>WTF25_SCHPO</name>
<feature type="chain" id="PRO_0000429003" description="Meiotic drive suppressor wtf25">
    <location>
        <begin position="1"/>
        <end position="249"/>
    </location>
</feature>
<feature type="transmembrane region" description="Helical" evidence="4">
    <location>
        <begin position="73"/>
        <end position="93"/>
    </location>
</feature>
<feature type="transmembrane region" description="Helical" evidence="4">
    <location>
        <begin position="110"/>
        <end position="130"/>
    </location>
</feature>
<feature type="transmembrane region" description="Helical" evidence="4">
    <location>
        <begin position="151"/>
        <end position="170"/>
    </location>
</feature>
<feature type="transmembrane region" description="Helical" evidence="4">
    <location>
        <begin position="187"/>
        <end position="207"/>
    </location>
</feature>
<feature type="region of interest" description="Disordered" evidence="5">
    <location>
        <begin position="1"/>
        <end position="40"/>
    </location>
</feature>
<feature type="compositionally biased region" description="Basic and acidic residues" evidence="5">
    <location>
        <begin position="19"/>
        <end position="30"/>
    </location>
</feature>
<sequence length="249" mass="28441">MKNNYTSLKSPLDEEDELKTDHEIDLEKGPLPEYDSEEEGALPPYSDHALVNNPLNTHRENHSYGTTDNSSPLLIILLISFTSIILFNAPAFCYLKYKDAFFKNYGAAEWTLFGFWCLVCTLALIFLTYFYETWSKACGKGIKHFLKNWRNMIFAFCKSSLFCLVLLKAENKLSSHLGDQRWGWKCSASAFTFMAVSSILIFIAETVEPGSCSTDLVKRTLAFYGYEIRQHVNEDATILLREMNPESEA</sequence>
<reference key="1">
    <citation type="journal article" date="2002" name="Nature">
        <title>The genome sequence of Schizosaccharomyces pombe.</title>
        <authorList>
            <person name="Wood V."/>
            <person name="Gwilliam R."/>
            <person name="Rajandream M.A."/>
            <person name="Lyne M.H."/>
            <person name="Lyne R."/>
            <person name="Stewart A."/>
            <person name="Sgouros J.G."/>
            <person name="Peat N."/>
            <person name="Hayles J."/>
            <person name="Baker S.G."/>
            <person name="Basham D."/>
            <person name="Bowman S."/>
            <person name="Brooks K."/>
            <person name="Brown D."/>
            <person name="Brown S."/>
            <person name="Chillingworth T."/>
            <person name="Churcher C.M."/>
            <person name="Collins M."/>
            <person name="Connor R."/>
            <person name="Cronin A."/>
            <person name="Davis P."/>
            <person name="Feltwell T."/>
            <person name="Fraser A."/>
            <person name="Gentles S."/>
            <person name="Goble A."/>
            <person name="Hamlin N."/>
            <person name="Harris D.E."/>
            <person name="Hidalgo J."/>
            <person name="Hodgson G."/>
            <person name="Holroyd S."/>
            <person name="Hornsby T."/>
            <person name="Howarth S."/>
            <person name="Huckle E.J."/>
            <person name="Hunt S."/>
            <person name="Jagels K."/>
            <person name="James K.D."/>
            <person name="Jones L."/>
            <person name="Jones M."/>
            <person name="Leather S."/>
            <person name="McDonald S."/>
            <person name="McLean J."/>
            <person name="Mooney P."/>
            <person name="Moule S."/>
            <person name="Mungall K.L."/>
            <person name="Murphy L.D."/>
            <person name="Niblett D."/>
            <person name="Odell C."/>
            <person name="Oliver K."/>
            <person name="O'Neil S."/>
            <person name="Pearson D."/>
            <person name="Quail M.A."/>
            <person name="Rabbinowitsch E."/>
            <person name="Rutherford K.M."/>
            <person name="Rutter S."/>
            <person name="Saunders D."/>
            <person name="Seeger K."/>
            <person name="Sharp S."/>
            <person name="Skelton J."/>
            <person name="Simmonds M.N."/>
            <person name="Squares R."/>
            <person name="Squares S."/>
            <person name="Stevens K."/>
            <person name="Taylor K."/>
            <person name="Taylor R.G."/>
            <person name="Tivey A."/>
            <person name="Walsh S.V."/>
            <person name="Warren T."/>
            <person name="Whitehead S."/>
            <person name="Woodward J.R."/>
            <person name="Volckaert G."/>
            <person name="Aert R."/>
            <person name="Robben J."/>
            <person name="Grymonprez B."/>
            <person name="Weltjens I."/>
            <person name="Vanstreels E."/>
            <person name="Rieger M."/>
            <person name="Schaefer M."/>
            <person name="Mueller-Auer S."/>
            <person name="Gabel C."/>
            <person name="Fuchs M."/>
            <person name="Duesterhoeft A."/>
            <person name="Fritzc C."/>
            <person name="Holzer E."/>
            <person name="Moestl D."/>
            <person name="Hilbert H."/>
            <person name="Borzym K."/>
            <person name="Langer I."/>
            <person name="Beck A."/>
            <person name="Lehrach H."/>
            <person name="Reinhardt R."/>
            <person name="Pohl T.M."/>
            <person name="Eger P."/>
            <person name="Zimmermann W."/>
            <person name="Wedler H."/>
            <person name="Wambutt R."/>
            <person name="Purnelle B."/>
            <person name="Goffeau A."/>
            <person name="Cadieu E."/>
            <person name="Dreano S."/>
            <person name="Gloux S."/>
            <person name="Lelaure V."/>
            <person name="Mottier S."/>
            <person name="Galibert F."/>
            <person name="Aves S.J."/>
            <person name="Xiang Z."/>
            <person name="Hunt C."/>
            <person name="Moore K."/>
            <person name="Hurst S.M."/>
            <person name="Lucas M."/>
            <person name="Rochet M."/>
            <person name="Gaillardin C."/>
            <person name="Tallada V.A."/>
            <person name="Garzon A."/>
            <person name="Thode G."/>
            <person name="Daga R.R."/>
            <person name="Cruzado L."/>
            <person name="Jimenez J."/>
            <person name="Sanchez M."/>
            <person name="del Rey F."/>
            <person name="Benito J."/>
            <person name="Dominguez A."/>
            <person name="Revuelta J.L."/>
            <person name="Moreno S."/>
            <person name="Armstrong J."/>
            <person name="Forsburg S.L."/>
            <person name="Cerutti L."/>
            <person name="Lowe T."/>
            <person name="McCombie W.R."/>
            <person name="Paulsen I."/>
            <person name="Potashkin J."/>
            <person name="Shpakovski G.V."/>
            <person name="Ussery D."/>
            <person name="Barrell B.G."/>
            <person name="Nurse P."/>
        </authorList>
    </citation>
    <scope>NUCLEOTIDE SEQUENCE [LARGE SCALE GENOMIC DNA]</scope>
    <source>
        <strain>972 / ATCC 24843</strain>
    </source>
</reference>
<reference key="2">
    <citation type="journal article" date="2006" name="Nat. Biotechnol.">
        <title>ORFeome cloning and global analysis of protein localization in the fission yeast Schizosaccharomyces pombe.</title>
        <authorList>
            <person name="Matsuyama A."/>
            <person name="Arai R."/>
            <person name="Yashiroda Y."/>
            <person name="Shirai A."/>
            <person name="Kamata A."/>
            <person name="Sekido S."/>
            <person name="Kobayashi Y."/>
            <person name="Hashimoto A."/>
            <person name="Hamamoto M."/>
            <person name="Hiraoka Y."/>
            <person name="Horinouchi S."/>
            <person name="Yoshida M."/>
        </authorList>
    </citation>
    <scope>SUBCELLULAR LOCATION [LARGE SCALE ANALYSIS]</scope>
</reference>